<evidence type="ECO:0000255" key="1">
    <source>
        <dbReference type="PROSITE-ProRule" id="PRU00267"/>
    </source>
</evidence>
<evidence type="ECO:0000256" key="2">
    <source>
        <dbReference type="SAM" id="MobiDB-lite"/>
    </source>
</evidence>
<evidence type="ECO:0000269" key="3">
    <source>
    </source>
</evidence>
<evidence type="ECO:0000269" key="4">
    <source>
    </source>
</evidence>
<evidence type="ECO:0000269" key="5">
    <source>
    </source>
</evidence>
<evidence type="ECO:0000269" key="6">
    <source>
    </source>
</evidence>
<evidence type="ECO:0000269" key="7">
    <source>
    </source>
</evidence>
<evidence type="ECO:0000269" key="8">
    <source>
    </source>
</evidence>
<evidence type="ECO:0000269" key="9">
    <source>
    </source>
</evidence>
<evidence type="ECO:0000269" key="10">
    <source>
    </source>
</evidence>
<evidence type="ECO:0000269" key="11">
    <source>
    </source>
</evidence>
<evidence type="ECO:0000269" key="12">
    <source>
    </source>
</evidence>
<evidence type="ECO:0000269" key="13">
    <source>
    </source>
</evidence>
<evidence type="ECO:0000269" key="14">
    <source>
    </source>
</evidence>
<evidence type="ECO:0000269" key="15">
    <source>
    </source>
</evidence>
<evidence type="ECO:0000269" key="16">
    <source>
    </source>
</evidence>
<evidence type="ECO:0000269" key="17">
    <source>
    </source>
</evidence>
<evidence type="ECO:0000269" key="18">
    <source>
    </source>
</evidence>
<evidence type="ECO:0000269" key="19">
    <source>
    </source>
</evidence>
<evidence type="ECO:0000305" key="20"/>
<evidence type="ECO:0007829" key="21">
    <source>
        <dbReference type="PDB" id="1G3J"/>
    </source>
</evidence>
<organism>
    <name type="scientific">Xenopus laevis</name>
    <name type="common">African clawed frog</name>
    <dbReference type="NCBI Taxonomy" id="8355"/>
    <lineage>
        <taxon>Eukaryota</taxon>
        <taxon>Metazoa</taxon>
        <taxon>Chordata</taxon>
        <taxon>Craniata</taxon>
        <taxon>Vertebrata</taxon>
        <taxon>Euteleostomi</taxon>
        <taxon>Amphibia</taxon>
        <taxon>Batrachia</taxon>
        <taxon>Anura</taxon>
        <taxon>Pipoidea</taxon>
        <taxon>Pipidae</taxon>
        <taxon>Xenopodinae</taxon>
        <taxon>Xenopus</taxon>
        <taxon>Xenopus</taxon>
    </lineage>
</organism>
<keyword id="KW-0002">3D-structure</keyword>
<keyword id="KW-0010">Activator</keyword>
<keyword id="KW-0963">Cytoplasm</keyword>
<keyword id="KW-0217">Developmental protein</keyword>
<keyword id="KW-0238">DNA-binding</keyword>
<keyword id="KW-0539">Nucleus</keyword>
<keyword id="KW-0597">Phosphoprotein</keyword>
<keyword id="KW-1185">Reference proteome</keyword>
<keyword id="KW-0678">Repressor</keyword>
<keyword id="KW-0804">Transcription</keyword>
<keyword id="KW-0805">Transcription regulation</keyword>
<keyword id="KW-0879">Wnt signaling pathway</keyword>
<dbReference type="EMBL" id="X99308">
    <property type="protein sequence ID" value="CAA67686.1"/>
    <property type="molecule type" value="mRNA"/>
</dbReference>
<dbReference type="RefSeq" id="NP_001081483.1">
    <property type="nucleotide sequence ID" value="NM_001088014.1"/>
</dbReference>
<dbReference type="PDB" id="1G3J">
    <property type="method" value="X-ray"/>
    <property type="resolution" value="2.10 A"/>
    <property type="chains" value="B/D=1-61"/>
</dbReference>
<dbReference type="PDBsum" id="1G3J"/>
<dbReference type="SMR" id="P70062"/>
<dbReference type="ELM" id="P70062"/>
<dbReference type="IntAct" id="P70062">
    <property type="interactions" value="5"/>
</dbReference>
<dbReference type="MINT" id="P70062"/>
<dbReference type="GeneID" id="397863"/>
<dbReference type="KEGG" id="xla:397863"/>
<dbReference type="AGR" id="Xenbase:XB-GENE-6252329"/>
<dbReference type="CTD" id="397863"/>
<dbReference type="Xenbase" id="XB-GENE-6252329">
    <property type="gene designation" value="tcf7l1.L"/>
</dbReference>
<dbReference type="OMA" id="HPLSWLV"/>
<dbReference type="OrthoDB" id="2307332at2759"/>
<dbReference type="EvolutionaryTrace" id="P70062"/>
<dbReference type="Proteomes" id="UP000186698">
    <property type="component" value="Chromosome 3L"/>
</dbReference>
<dbReference type="Bgee" id="397863">
    <property type="expression patterns" value="Expressed in gastrula and 19 other cell types or tissues"/>
</dbReference>
<dbReference type="GO" id="GO:1990907">
    <property type="term" value="C:beta-catenin-TCF complex"/>
    <property type="evidence" value="ECO:0000318"/>
    <property type="project" value="GO_Central"/>
</dbReference>
<dbReference type="GO" id="GO:0000785">
    <property type="term" value="C:chromatin"/>
    <property type="evidence" value="ECO:0000318"/>
    <property type="project" value="GO_Central"/>
</dbReference>
<dbReference type="GO" id="GO:0005737">
    <property type="term" value="C:cytoplasm"/>
    <property type="evidence" value="ECO:0007669"/>
    <property type="project" value="UniProtKB-SubCell"/>
</dbReference>
<dbReference type="GO" id="GO:0005654">
    <property type="term" value="C:nucleoplasm"/>
    <property type="evidence" value="ECO:0000304"/>
    <property type="project" value="Reactome"/>
</dbReference>
<dbReference type="GO" id="GO:0005634">
    <property type="term" value="C:nucleus"/>
    <property type="evidence" value="ECO:0000305"/>
    <property type="project" value="UniProtKB"/>
</dbReference>
<dbReference type="GO" id="GO:0005667">
    <property type="term" value="C:transcription regulator complex"/>
    <property type="evidence" value="ECO:0000353"/>
    <property type="project" value="UniProtKB"/>
</dbReference>
<dbReference type="GO" id="GO:0000981">
    <property type="term" value="F:DNA-binding transcription factor activity, RNA polymerase II-specific"/>
    <property type="evidence" value="ECO:0000318"/>
    <property type="project" value="GO_Central"/>
</dbReference>
<dbReference type="GO" id="GO:0140297">
    <property type="term" value="F:DNA-binding transcription factor binding"/>
    <property type="evidence" value="ECO:0000353"/>
    <property type="project" value="UniProtKB"/>
</dbReference>
<dbReference type="GO" id="GO:0000978">
    <property type="term" value="F:RNA polymerase II cis-regulatory region sequence-specific DNA binding"/>
    <property type="evidence" value="ECO:0000318"/>
    <property type="project" value="GO_Central"/>
</dbReference>
<dbReference type="GO" id="GO:0043565">
    <property type="term" value="F:sequence-specific DNA binding"/>
    <property type="evidence" value="ECO:0000314"/>
    <property type="project" value="UniProtKB"/>
</dbReference>
<dbReference type="GO" id="GO:0060070">
    <property type="term" value="P:canonical Wnt signaling pathway"/>
    <property type="evidence" value="ECO:0000318"/>
    <property type="project" value="GO_Central"/>
</dbReference>
<dbReference type="GO" id="GO:0000122">
    <property type="term" value="P:negative regulation of transcription by RNA polymerase II"/>
    <property type="evidence" value="ECO:0000314"/>
    <property type="project" value="UniProtKB"/>
</dbReference>
<dbReference type="GO" id="GO:0006357">
    <property type="term" value="P:regulation of transcription by RNA polymerase II"/>
    <property type="evidence" value="ECO:0000318"/>
    <property type="project" value="GO_Central"/>
</dbReference>
<dbReference type="CDD" id="cd21996">
    <property type="entry name" value="HMG-box_TCF7-like"/>
    <property type="match status" value="1"/>
</dbReference>
<dbReference type="FunFam" id="1.10.30.10:FF:000001">
    <property type="entry name" value="transcription factor 7 isoform X2"/>
    <property type="match status" value="1"/>
</dbReference>
<dbReference type="FunFam" id="4.10.900.10:FF:000002">
    <property type="entry name" value="transcription factor 7-like 2 isoform X1"/>
    <property type="match status" value="1"/>
</dbReference>
<dbReference type="Gene3D" id="1.10.30.10">
    <property type="entry name" value="High mobility group box domain"/>
    <property type="match status" value="1"/>
</dbReference>
<dbReference type="Gene3D" id="4.10.900.10">
    <property type="entry name" value="TCF3-CBD (Catenin binding domain)"/>
    <property type="match status" value="1"/>
</dbReference>
<dbReference type="IDEAL" id="IID50010"/>
<dbReference type="InterPro" id="IPR027397">
    <property type="entry name" value="Catenin-bd_sf"/>
</dbReference>
<dbReference type="InterPro" id="IPR013558">
    <property type="entry name" value="CTNNB1-bd_N"/>
</dbReference>
<dbReference type="InterPro" id="IPR009071">
    <property type="entry name" value="HMG_box_dom"/>
</dbReference>
<dbReference type="InterPro" id="IPR036910">
    <property type="entry name" value="HMG_box_dom_sf"/>
</dbReference>
<dbReference type="InterPro" id="IPR024940">
    <property type="entry name" value="TCF/LEF"/>
</dbReference>
<dbReference type="PANTHER" id="PTHR10373">
    <property type="entry name" value="TRANSCRIPTION FACTOR 7 FAMILY MEMBER"/>
    <property type="match status" value="1"/>
</dbReference>
<dbReference type="PANTHER" id="PTHR10373:SF25">
    <property type="entry name" value="TRANSCRIPTION FACTOR 7-LIKE 1"/>
    <property type="match status" value="1"/>
</dbReference>
<dbReference type="Pfam" id="PF08347">
    <property type="entry name" value="CTNNB1_binding"/>
    <property type="match status" value="1"/>
</dbReference>
<dbReference type="Pfam" id="PF00505">
    <property type="entry name" value="HMG_box"/>
    <property type="match status" value="1"/>
</dbReference>
<dbReference type="SMART" id="SM00398">
    <property type="entry name" value="HMG"/>
    <property type="match status" value="1"/>
</dbReference>
<dbReference type="SUPFAM" id="SSF47095">
    <property type="entry name" value="HMG-box"/>
    <property type="match status" value="1"/>
</dbReference>
<dbReference type="PROSITE" id="PS50118">
    <property type="entry name" value="HMG_BOX_2"/>
    <property type="match status" value="1"/>
</dbReference>
<sequence>MPQLNSGGGDELGANDELIRFKDEGEQEEKSPGEGSAEGDLADVKSSLVNESENHSSDSDSEVERRPPPREAFEKHRDYLTEALRRQQDAAFFKGPPYAGYPFLMIPDLGGHYLPNGALSPSARTYLQMKWPLLDSPSTAGLKDARSPSPAHLSNKVPVVQHPHHMHPLTPLITYSNEHFSPGTPPGHLSPEIDPKTGIPRPPHPSELSPYYPLSPGAVGQIPHPLGWLVPPQGQPMYSIPPGGFRHPYPALAMNASMSSLVSSRFSPHMVPPPHHSLHTSGIPHPAIVSPIVKQEPSSGNISPNLHTKSNMIVKKEEEKKPHIKKPLNAFMLYMKEMRAKVVAECTLKESAAINQILGRRWHSLSREEQAKYYELARKERQLHSQLYPSWSARDNYGKRKKRKREKQSPEMETHTKTKKMCVQHLPADKSCDSPASSHGSMLDSPATPSAALASPAAPAATHSEQAQPLSLTTKPEARAQLSLSHSAAFLASKSPSSSSFSGHLSSPVGSPLLSRPIPLTSSILSPSGVFPSALQALPLLQAQPLSLVTKSSD</sequence>
<proteinExistence type="evidence at protein level"/>
<feature type="chain" id="PRO_0000048616" description="Transcription factor 7-like 1-A">
    <location>
        <begin position="1"/>
        <end position="554"/>
    </location>
</feature>
<feature type="DNA-binding region" description="HMG box" evidence="1">
    <location>
        <begin position="324"/>
        <end position="392"/>
    </location>
</feature>
<feature type="region of interest" description="Disordered" evidence="2">
    <location>
        <begin position="1"/>
        <end position="73"/>
    </location>
</feature>
<feature type="region of interest" description="Interaction with CTNNB1-A">
    <location>
        <begin position="1"/>
        <end position="61"/>
    </location>
</feature>
<feature type="region of interest" description="Interaction with AES and TLE4-A" evidence="19">
    <location>
        <begin position="109"/>
        <end position="312"/>
    </location>
</feature>
<feature type="region of interest" description="Disordered" evidence="2">
    <location>
        <begin position="183"/>
        <end position="213"/>
    </location>
</feature>
<feature type="region of interest" description="Disordered" evidence="2">
    <location>
        <begin position="391"/>
        <end position="475"/>
    </location>
</feature>
<feature type="region of interest" description="Interaction with CTBP-B" evidence="3">
    <location>
        <begin position="408"/>
        <end position="554"/>
    </location>
</feature>
<feature type="compositionally biased region" description="Gly residues" evidence="2">
    <location>
        <begin position="1"/>
        <end position="11"/>
    </location>
</feature>
<feature type="compositionally biased region" description="Basic and acidic residues" evidence="2">
    <location>
        <begin position="17"/>
        <end position="32"/>
    </location>
</feature>
<feature type="compositionally biased region" description="Basic and acidic residues" evidence="2">
    <location>
        <begin position="52"/>
        <end position="73"/>
    </location>
</feature>
<feature type="compositionally biased region" description="Basic and acidic residues" evidence="2">
    <location>
        <begin position="407"/>
        <end position="416"/>
    </location>
</feature>
<feature type="compositionally biased region" description="Low complexity" evidence="2">
    <location>
        <begin position="445"/>
        <end position="464"/>
    </location>
</feature>
<feature type="compositionally biased region" description="Polar residues" evidence="2">
    <location>
        <begin position="465"/>
        <end position="474"/>
    </location>
</feature>
<feature type="mutagenesis site" description="May abrogate binding to CTBP-B." evidence="3">
    <original>PL</original>
    <variation>AS</variation>
    <location>
        <begin position="469"/>
        <end position="470"/>
    </location>
</feature>
<feature type="mutagenesis site" description="May abrogate binding to CTBP-B." evidence="3">
    <original>PL</original>
    <variation>AS</variation>
    <location>
        <begin position="545"/>
        <end position="546"/>
    </location>
</feature>
<feature type="helix" evidence="21">
    <location>
        <begin position="42"/>
        <end position="49"/>
    </location>
</feature>
<name>T7L1A_XENLA</name>
<protein>
    <recommendedName>
        <fullName>Transcription factor 7-like 1-A</fullName>
    </recommendedName>
    <alternativeName>
        <fullName>HMG box transcription factor 3-A</fullName>
        <shortName>TCF-3-A</shortName>
        <shortName>xTcf-3</shortName>
    </alternativeName>
</protein>
<reference key="1">
    <citation type="journal article" date="1996" name="Cell">
        <title>XTcf-3 transcription factor mediates beta-catenin-induced axis formation in Xenopus embryos.</title>
        <authorList>
            <person name="Molenaar M."/>
            <person name="van de Wetering M."/>
            <person name="Peterson-Maduro J."/>
            <person name="Godsave S."/>
            <person name="Korinkek V."/>
            <person name="Roose J."/>
            <person name="Destree O."/>
            <person name="Clevers H."/>
        </authorList>
    </citation>
    <scope>NUCLEOTIDE SEQUENCE [MRNA]</scope>
    <scope>FUNCTION</scope>
    <scope>DNA-BINDING</scope>
    <scope>SUBCELLULAR LOCATION</scope>
</reference>
<reference key="2">
    <citation type="journal article" date="1997" name="Genes Dev.">
        <title>A beta-catenin/XTcf-3 complex binds to the siamois promoter to regulate dorsal axis specification in Xenopus.</title>
        <authorList>
            <person name="Brannon M."/>
            <person name="Gomperts M."/>
            <person name="Sumoy L."/>
            <person name="Moon R.T."/>
            <person name="Kimelman D."/>
        </authorList>
    </citation>
    <scope>FUNCTION</scope>
    <scope>DNA-BINDING</scope>
    <scope>INTERACTION WITH CTNNB1-A</scope>
</reference>
<reference key="3">
    <citation type="journal article" date="1998" name="Nature">
        <title>The Xenopus Wnt effector XTcf-3 interacts with Groucho-related transcriptional repressors.</title>
        <authorList>
            <person name="Roose J."/>
            <person name="Molenaar M."/>
            <person name="Peterson J."/>
            <person name="Hurenkamp J."/>
            <person name="Brantjes H."/>
            <person name="Moerer P."/>
            <person name="van de Wetering M."/>
            <person name="Destree O."/>
            <person name="Clevers H."/>
        </authorList>
    </citation>
    <scope>FUNCTION</scope>
    <scope>INTERACTION WITH AES AND TLE4-A</scope>
</reference>
<reference key="4">
    <citation type="journal article" date="1999" name="Development">
        <title>XCtBP is a XTcf-3 co-repressor with roles throughout Xenopus development.</title>
        <authorList>
            <person name="Brannon M."/>
            <person name="Brown J.D."/>
            <person name="Bates R."/>
            <person name="Kimelman D."/>
            <person name="Moon R.T."/>
        </authorList>
    </citation>
    <scope>FUNCTION</scope>
    <scope>INTERACTION WITH CTBP-B</scope>
    <scope>MUTAGENESIS OF 469-PRO-LEU-470 AND 545-PRO-LEU-546</scope>
</reference>
<reference key="5">
    <citation type="journal article" date="1999" name="Mech. Dev.">
        <title>Direct regulation of the Xenopus engrailed-2 promoter by the Wnt signaling pathway, and a molecular screen for Wnt-responsive genes, confirm a role for Wnt signaling during neural patterning in Xenopus.</title>
        <authorList>
            <person name="McGrew L.L."/>
            <person name="Takemaru K."/>
            <person name="Bates R."/>
            <person name="Moon R.T."/>
        </authorList>
    </citation>
    <scope>FUNCTION</scope>
</reference>
<reference key="6">
    <citation type="journal article" date="1999" name="Mech. Dev.">
        <title>Relationship of vegetal cortical dorsal factors in the Xenopus egg with the Wnt/beta-catenin signaling pathway.</title>
        <authorList>
            <person name="Marikawa Y."/>
            <person name="Elinson R.P."/>
        </authorList>
    </citation>
    <scope>FUNCTION</scope>
</reference>
<reference key="7">
    <citation type="journal article" date="2001" name="Development">
        <title>Difference in XTcf-3 dependency accounts for change in response to beta-catenin-mediated Wnt signalling in Xenopus blastula.</title>
        <authorList>
            <person name="Hamilton F.S."/>
            <person name="Wheeler G.N."/>
            <person name="Hoppler S."/>
        </authorList>
    </citation>
    <scope>FUNCTION</scope>
</reference>
<reference key="8">
    <citation type="journal article" date="2001" name="Dev. Biol.">
        <title>Axis induction by wnt signaling: target promoter responsiveness regulates competence.</title>
        <authorList>
            <person name="Darken R.S."/>
            <person name="Wilson P.A."/>
        </authorList>
    </citation>
    <scope>FUNCTION</scope>
</reference>
<reference key="9">
    <citation type="journal article" date="2001" name="J. Cell Biol.">
        <title>Physiological regulation of beta-catenin stability by Tcf3 and CK1epsilon.</title>
        <authorList>
            <person name="Lee E."/>
            <person name="Salic A."/>
            <person name="Kirschner M.W."/>
        </authorList>
    </citation>
    <scope>FUNCTION</scope>
    <scope>INTERACTION WITH CSNK1E; CTNNB1-A AND GSK3B</scope>
    <scope>SUBCELLULAR LOCATION</scope>
    <scope>PHOSPHORYLATION</scope>
</reference>
<reference key="10">
    <citation type="journal article" date="2001" name="Mol. Cell. Biol.">
        <title>Inhibition of Tcf3 binding by I-mfa domain proteins.</title>
        <authorList>
            <person name="Snider L."/>
            <person name="Thirlwell H."/>
            <person name="Miller J.R."/>
            <person name="Moon R.T."/>
            <person name="Groudine M."/>
            <person name="Tapscott S.J."/>
        </authorList>
    </citation>
    <scope>FUNCTION</scope>
    <scope>DNA-BINDING</scope>
</reference>
<reference key="11">
    <citation type="journal article" date="2002" name="Curr. Biol.">
        <title>Lef-1 and Tcf-3 transcription factors mediate tissue-specific Wnt signaling during Xenopus development.</title>
        <authorList>
            <person name="Roeel G."/>
            <person name="Hamilton F.S."/>
            <person name="Gent Y."/>
            <person name="Bain A.A."/>
            <person name="Destree O."/>
            <person name="Hoppler S."/>
        </authorList>
    </citation>
    <scope>FUNCTION</scope>
</reference>
<reference key="12">
    <citation type="journal article" date="2002" name="Development">
        <title>Repression of organizer genes in dorsal and ventral Xenopus cells mediated by maternal XTcf3.</title>
        <authorList>
            <person name="Houston D.W."/>
            <person name="Kofron M."/>
            <person name="Resnik E."/>
            <person name="Langland R."/>
            <person name="Destree O."/>
            <person name="Wylie C."/>
            <person name="Heasman J."/>
        </authorList>
    </citation>
    <scope>FUNCTION</scope>
</reference>
<reference key="13">
    <citation type="journal article" date="2002" name="Int. J. Dev. Biol.">
        <title>Multiple interactions between maternally-activated signalling pathways control Xenopus nodal-related genes.</title>
        <authorList>
            <person name="Rex M."/>
            <person name="Hilton E."/>
            <person name="Old R.W."/>
        </authorList>
    </citation>
    <scope>FUNCTION</scope>
</reference>
<reference key="14">
    <citation type="journal article" date="2002" name="Mech. Dev.">
        <title>Repression through a distal TCF-3 binding site restricts Xenopus myf-5 expression in gastrula mesoderm.</title>
        <authorList>
            <person name="Yang J."/>
            <person name="Mei W."/>
            <person name="Otto A."/>
            <person name="Xiao L."/>
            <person name="Tao Q."/>
            <person name="Geng X."/>
            <person name="Rupp R.A.W."/>
            <person name="Ding X."/>
        </authorList>
    </citation>
    <scope>DNA-BINDING</scope>
</reference>
<reference key="15">
    <citation type="journal article" date="2003" name="Mech. Dev.">
        <title>VegT activation of the early zygotic gene Xnr5 requires lifting of Tcf-mediated repression in the Xenopus blastula.</title>
        <authorList>
            <person name="Hilton E."/>
            <person name="Rex M."/>
            <person name="Old R."/>
        </authorList>
    </citation>
    <scope>FUNCTION</scope>
</reference>
<reference key="16">
    <citation type="journal article" date="2004" name="Development">
        <title>The involvement of Frodo in TCF-dependent signaling and neural tissue development.</title>
        <authorList>
            <person name="Hikasa H."/>
            <person name="Sokol S.Y."/>
        </authorList>
    </citation>
    <scope>FUNCTION</scope>
    <scope>INTERACTION WITH DACT1-A</scope>
</reference>
<reference key="17">
    <citation type="journal article" date="2005" name="Dev. Genes Evol.">
        <title>Choice of either beta-catenin or Groucho/TLE as a co-factor for Xtcf-3 determines dorsal-ventral cell fate of diencephalon during Xenopus development.</title>
        <authorList>
            <person name="Tsuji S."/>
            <person name="Hashimoto C."/>
        </authorList>
    </citation>
    <scope>FUNCTION</scope>
</reference>
<reference key="18">
    <citation type="journal article" date="2005" name="Mol. Cell. Biol.">
        <title>XIC is required for Siamois activity and dorsoanterior development.</title>
        <authorList>
            <person name="Snider L."/>
            <person name="Tapscott S.J."/>
        </authorList>
    </citation>
    <scope>FUNCTION</scope>
</reference>
<reference key="19">
    <citation type="journal article" date="2000" name="Cell">
        <title>Crystal structure of a beta-catenin/Tcf complex.</title>
        <authorList>
            <person name="Graham T.A."/>
            <person name="Weaver C."/>
            <person name="Mao F."/>
            <person name="Kimelman D."/>
            <person name="Xu W."/>
        </authorList>
    </citation>
    <scope>X-RAY CRYSTALLOGRAPHY (2.1 ANGSTROMS) OF 1-61</scope>
</reference>
<accession>P70062</accession>
<gene>
    <name type="primary">tcf7l1-a</name>
    <name type="synonym">tcf3</name>
    <name type="synonym">tcf3a</name>
</gene>
<comment type="function">
    <text evidence="3 4 5 6 7 8 9 10 11 12 13 14 15 16 17 18 19">Participates in the Wnt signaling pathway. Binds to DNA and acts as a repressor in the absence of ctnnb1-A and possibly ctnnb1-B, and as an activator in the presence of these proteins. Required early in development for the establishment of the dorsal body axis in response to maternal Wnt signaling. Also required during development of the CNS for the establishment of dorsal-ventral patterning in the prospective diencephalon.</text>
</comment>
<comment type="subunit">
    <text evidence="3 9 14 18 19">Interacts with csnk1e, ctnnb1-A, ctbp-B, dact1-A and gsk3b. May interact with ase and tle4-A.</text>
</comment>
<comment type="interaction">
    <interactant intactId="EBI-6259044">
        <id>P70062</id>
    </interactant>
    <interactant intactId="EBI-6259065">
        <id>Q8JJ48</id>
        <label>dact1-a</label>
    </interactant>
    <organismsDiffer>false</organismsDiffer>
    <experiments>3</experiments>
</comment>
<comment type="interaction">
    <interactant intactId="EBI-6259044">
        <id>P70062</id>
    </interactant>
    <interactant intactId="EBI-7373787">
        <id>A0SNQ7</id>
        <label>tshz3.L</label>
    </interactant>
    <organismsDiffer>false</organismsDiffer>
    <experiments>2</experiments>
</comment>
<comment type="subcellular location">
    <subcellularLocation>
        <location>Cytoplasm</location>
    </subcellularLocation>
    <subcellularLocation>
        <location>Nucleus</location>
    </subcellularLocation>
</comment>
<comment type="PTM">
    <text evidence="9">Phosphorylated. Phosphorylation by csnk1e promotes binding to ctnnb1-A while phosphorylation by gsk3b may reverse this effect.</text>
</comment>
<comment type="similarity">
    <text evidence="20">Belongs to the TCF/LEF family.</text>
</comment>